<accession>Q8EB96</accession>
<feature type="signal peptide" evidence="1">
    <location>
        <begin position="1"/>
        <end position="18"/>
    </location>
</feature>
<feature type="chain" id="PRO_0000281633" description="LPS-assembly protein LptD">
    <location>
        <begin position="19"/>
        <end position="765"/>
    </location>
</feature>
<keyword id="KW-0998">Cell outer membrane</keyword>
<keyword id="KW-0472">Membrane</keyword>
<keyword id="KW-1185">Reference proteome</keyword>
<keyword id="KW-0732">Signal</keyword>
<gene>
    <name evidence="1" type="primary">lptD</name>
    <name type="synonym">imp</name>
    <name type="synonym">ostA</name>
    <name type="ordered locus">SO_3636</name>
</gene>
<name>LPTD_SHEON</name>
<sequence>MQIRYLLALSLLPKLVLADESPATSASQCLIEPPVPRIVSQPGLSAADQAKIRIASDRSKAEMGKQAIFTGDVVFSQGDRHIAADEAILDQATEQFDANGNLVFQDSNFTVTADSLQAQMRSNRATLTGAQYWLHGQQVHGDAEKLQITINNNLILTNTNFTTCPPDNVSWLLEAEKIKINSEEEWGEIWNAKLRVADIPVFYIPYMTVPVSDKRKTGFLYPSFSTSTTNGFEVSAPYYWNIAPEYDLTFTPNYMTNRGLFTKTEFRYLAGEAQNGRLNLEYLGSDQMLNGSPNRYLYNWQHQGAIDKNWRVLANFTEVSDNNYFNDLKSDVNRATDNQLSRIGEVSYFERDWDISTRVQDIKVLGEDEKPYQVMPQVNFNYRAADFWNNLDFGFNSELTNFAHQDDDVNTATRLHMAPSLTLPIHGPSGSFTSQLKLMQTNYWQEKNNSKFDSLDDTVSRTIPQVRINGQINFERFTELFEHNYRQTLEPQFQYLYVGYEDQRGIGIYDTAQLQDDYFGLFRDRRFSGLDRIADANQVTLGITTRLFDDHNQEATKFSLGQIFYLQDSKLGYEDNIFEQNQSTSVLAAELDTRLSSNWYLGAAIQYDTNTSDNKKTEVTLDFRPEANKLLQFSYRYVPDLLNSNTNDLVNISQAGVRGAWPINDSLYFVGNWYYDLNETRSIETYTGVQYESCCYAIRLSYHYRIKTNYDDNIGSTIIDEREQFESGVYLNLIIKGLGGSGPLGVSDMLNDGLFNYRKPLYLRN</sequence>
<evidence type="ECO:0000255" key="1">
    <source>
        <dbReference type="HAMAP-Rule" id="MF_01411"/>
    </source>
</evidence>
<dbReference type="EMBL" id="AE014299">
    <property type="protein sequence ID" value="AAN56622.1"/>
    <property type="molecule type" value="Genomic_DNA"/>
</dbReference>
<dbReference type="RefSeq" id="NP_719178.1">
    <property type="nucleotide sequence ID" value="NC_004347.2"/>
</dbReference>
<dbReference type="RefSeq" id="WP_011073439.1">
    <property type="nucleotide sequence ID" value="NC_004347.2"/>
</dbReference>
<dbReference type="SMR" id="Q8EB96"/>
<dbReference type="STRING" id="211586.SO_3636"/>
<dbReference type="PaxDb" id="211586-SO_3636"/>
<dbReference type="KEGG" id="son:SO_3636"/>
<dbReference type="PATRIC" id="fig|211586.12.peg.3525"/>
<dbReference type="eggNOG" id="COG1452">
    <property type="taxonomic scope" value="Bacteria"/>
</dbReference>
<dbReference type="HOGENOM" id="CLU_009039_2_0_6"/>
<dbReference type="OrthoDB" id="9760225at2"/>
<dbReference type="PhylomeDB" id="Q8EB96"/>
<dbReference type="BioCyc" id="SONE211586:G1GMP-3387-MONOMER"/>
<dbReference type="Proteomes" id="UP000008186">
    <property type="component" value="Chromosome"/>
</dbReference>
<dbReference type="GO" id="GO:0009279">
    <property type="term" value="C:cell outer membrane"/>
    <property type="evidence" value="ECO:0000318"/>
    <property type="project" value="GO_Central"/>
</dbReference>
<dbReference type="GO" id="GO:1990351">
    <property type="term" value="C:transporter complex"/>
    <property type="evidence" value="ECO:0000318"/>
    <property type="project" value="GO_Central"/>
</dbReference>
<dbReference type="GO" id="GO:0043165">
    <property type="term" value="P:Gram-negative-bacterium-type cell outer membrane assembly"/>
    <property type="evidence" value="ECO:0007669"/>
    <property type="project" value="UniProtKB-UniRule"/>
</dbReference>
<dbReference type="GO" id="GO:0015920">
    <property type="term" value="P:lipopolysaccharide transport"/>
    <property type="evidence" value="ECO:0007669"/>
    <property type="project" value="InterPro"/>
</dbReference>
<dbReference type="Gene3D" id="2.60.450.10">
    <property type="entry name" value="Lipopolysaccharide (LPS) transport protein A like domain"/>
    <property type="match status" value="1"/>
</dbReference>
<dbReference type="HAMAP" id="MF_01411">
    <property type="entry name" value="LPS_assembly_LptD"/>
    <property type="match status" value="1"/>
</dbReference>
<dbReference type="InterPro" id="IPR020889">
    <property type="entry name" value="LipoPS_assembly_LptD"/>
</dbReference>
<dbReference type="InterPro" id="IPR050218">
    <property type="entry name" value="LptD"/>
</dbReference>
<dbReference type="InterPro" id="IPR007543">
    <property type="entry name" value="LptD_C"/>
</dbReference>
<dbReference type="InterPro" id="IPR005653">
    <property type="entry name" value="OstA-like_N"/>
</dbReference>
<dbReference type="NCBIfam" id="NF002997">
    <property type="entry name" value="PRK03761.1"/>
    <property type="match status" value="1"/>
</dbReference>
<dbReference type="PANTHER" id="PTHR30189">
    <property type="entry name" value="LPS-ASSEMBLY PROTEIN"/>
    <property type="match status" value="1"/>
</dbReference>
<dbReference type="PANTHER" id="PTHR30189:SF1">
    <property type="entry name" value="LPS-ASSEMBLY PROTEIN LPTD"/>
    <property type="match status" value="1"/>
</dbReference>
<dbReference type="Pfam" id="PF04453">
    <property type="entry name" value="LptD"/>
    <property type="match status" value="1"/>
</dbReference>
<dbReference type="Pfam" id="PF03968">
    <property type="entry name" value="LptD_N"/>
    <property type="match status" value="1"/>
</dbReference>
<proteinExistence type="inferred from homology"/>
<comment type="function">
    <text evidence="1">Together with LptE, is involved in the assembly of lipopolysaccharide (LPS) at the surface of the outer membrane.</text>
</comment>
<comment type="subunit">
    <text evidence="1">Component of the lipopolysaccharide transport and assembly complex. Interacts with LptE and LptA.</text>
</comment>
<comment type="subcellular location">
    <subcellularLocation>
        <location evidence="1">Cell outer membrane</location>
    </subcellularLocation>
</comment>
<comment type="similarity">
    <text evidence="1">Belongs to the LptD family.</text>
</comment>
<protein>
    <recommendedName>
        <fullName evidence="1">LPS-assembly protein LptD</fullName>
    </recommendedName>
</protein>
<reference key="1">
    <citation type="journal article" date="2002" name="Nat. Biotechnol.">
        <title>Genome sequence of the dissimilatory metal ion-reducing bacterium Shewanella oneidensis.</title>
        <authorList>
            <person name="Heidelberg J.F."/>
            <person name="Paulsen I.T."/>
            <person name="Nelson K.E."/>
            <person name="Gaidos E.J."/>
            <person name="Nelson W.C."/>
            <person name="Read T.D."/>
            <person name="Eisen J.A."/>
            <person name="Seshadri R."/>
            <person name="Ward N.L."/>
            <person name="Methe B.A."/>
            <person name="Clayton R.A."/>
            <person name="Meyer T."/>
            <person name="Tsapin A."/>
            <person name="Scott J."/>
            <person name="Beanan M.J."/>
            <person name="Brinkac L.M."/>
            <person name="Daugherty S.C."/>
            <person name="DeBoy R.T."/>
            <person name="Dodson R.J."/>
            <person name="Durkin A.S."/>
            <person name="Haft D.H."/>
            <person name="Kolonay J.F."/>
            <person name="Madupu R."/>
            <person name="Peterson J.D."/>
            <person name="Umayam L.A."/>
            <person name="White O."/>
            <person name="Wolf A.M."/>
            <person name="Vamathevan J.J."/>
            <person name="Weidman J.F."/>
            <person name="Impraim M."/>
            <person name="Lee K."/>
            <person name="Berry K.J."/>
            <person name="Lee C."/>
            <person name="Mueller J."/>
            <person name="Khouri H.M."/>
            <person name="Gill J."/>
            <person name="Utterback T.R."/>
            <person name="McDonald L.A."/>
            <person name="Feldblyum T.V."/>
            <person name="Smith H.O."/>
            <person name="Venter J.C."/>
            <person name="Nealson K.H."/>
            <person name="Fraser C.M."/>
        </authorList>
    </citation>
    <scope>NUCLEOTIDE SEQUENCE [LARGE SCALE GENOMIC DNA]</scope>
    <source>
        <strain>ATCC 700550 / JCM 31522 / CIP 106686 / LMG 19005 / NCIMB 14063 / MR-1</strain>
    </source>
</reference>
<organism>
    <name type="scientific">Shewanella oneidensis (strain ATCC 700550 / JCM 31522 / CIP 106686 / LMG 19005 / NCIMB 14063 / MR-1)</name>
    <dbReference type="NCBI Taxonomy" id="211586"/>
    <lineage>
        <taxon>Bacteria</taxon>
        <taxon>Pseudomonadati</taxon>
        <taxon>Pseudomonadota</taxon>
        <taxon>Gammaproteobacteria</taxon>
        <taxon>Alteromonadales</taxon>
        <taxon>Shewanellaceae</taxon>
        <taxon>Shewanella</taxon>
    </lineage>
</organism>